<reference key="1">
    <citation type="journal article" date="2004" name="Science">
        <title>The Ashbya gossypii genome as a tool for mapping the ancient Saccharomyces cerevisiae genome.</title>
        <authorList>
            <person name="Dietrich F.S."/>
            <person name="Voegeli S."/>
            <person name="Brachat S."/>
            <person name="Lerch A."/>
            <person name="Gates K."/>
            <person name="Steiner S."/>
            <person name="Mohr C."/>
            <person name="Poehlmann R."/>
            <person name="Luedi P."/>
            <person name="Choi S."/>
            <person name="Wing R.A."/>
            <person name="Flavier A."/>
            <person name="Gaffney T.D."/>
            <person name="Philippsen P."/>
        </authorList>
    </citation>
    <scope>NUCLEOTIDE SEQUENCE [LARGE SCALE GENOMIC DNA]</scope>
    <source>
        <strain>ATCC 10895 / CBS 109.51 / FGSC 9923 / NRRL Y-1056</strain>
    </source>
</reference>
<reference key="2">
    <citation type="journal article" date="2013" name="G3 (Bethesda)">
        <title>Genomes of Ashbya fungi isolated from insects reveal four mating-type loci, numerous translocations, lack of transposons, and distinct gene duplications.</title>
        <authorList>
            <person name="Dietrich F.S."/>
            <person name="Voegeli S."/>
            <person name="Kuo S."/>
            <person name="Philippsen P."/>
        </authorList>
    </citation>
    <scope>GENOME REANNOTATION</scope>
    <source>
        <strain>ATCC 10895 / CBS 109.51 / FGSC 9923 / NRRL Y-1056</strain>
    </source>
</reference>
<sequence>MSFWKVATLWQMPLRPSILVQVRTATKRAAGSRTSMKDSAGRRLGPKKTEGQRVEVGQIIMRQRGTRFYPGENVGIGKDHTLFALEPGWVRYYLDPFHTGRKFVGVALYQDMRLPIEHFAPRVRRFGRQLLSGKEAETEEQALPRSVFLAKEKILERAQQRADAREQRRAEFGHILREELGLALDQDAEQLATEYLLRVQTNLKSGFNSADARFNAMYHMEVRMRNTPEKVGQMDLLKKTVASVDAATSFSNKFELGRHISEGERVAWREALHKDLAGLVIRTAEEKQRVVERLKEASKYLSLSEEIHLRRKFLKPVKPETEAVAEAAGKGTVTIKRFNYGTGKVDTIIREKKAFLAKL</sequence>
<protein>
    <recommendedName>
        <fullName evidence="3">Large ribosomal subunit protein bL27m</fullName>
    </recommendedName>
    <alternativeName>
        <fullName>54S ribosomal protein L2, mitochondrial</fullName>
    </alternativeName>
</protein>
<accession>Q75ET6</accession>
<feature type="transit peptide" description="Mitochondrion" evidence="1">
    <location>
        <begin position="1"/>
        <end position="24"/>
    </location>
</feature>
<feature type="chain" id="PRO_0000030497" description="Large ribosomal subunit protein bL27m">
    <location>
        <begin position="25"/>
        <end position="359"/>
    </location>
</feature>
<feature type="region of interest" description="Disordered" evidence="2">
    <location>
        <begin position="29"/>
        <end position="48"/>
    </location>
</feature>
<feature type="compositionally biased region" description="Basic and acidic residues" evidence="2">
    <location>
        <begin position="35"/>
        <end position="48"/>
    </location>
</feature>
<gene>
    <name type="primary">MRPL2</name>
    <name type="ordered locus">AAL020C</name>
</gene>
<organism>
    <name type="scientific">Eremothecium gossypii (strain ATCC 10895 / CBS 109.51 / FGSC 9923 / NRRL Y-1056)</name>
    <name type="common">Yeast</name>
    <name type="synonym">Ashbya gossypii</name>
    <dbReference type="NCBI Taxonomy" id="284811"/>
    <lineage>
        <taxon>Eukaryota</taxon>
        <taxon>Fungi</taxon>
        <taxon>Dikarya</taxon>
        <taxon>Ascomycota</taxon>
        <taxon>Saccharomycotina</taxon>
        <taxon>Saccharomycetes</taxon>
        <taxon>Saccharomycetales</taxon>
        <taxon>Saccharomycetaceae</taxon>
        <taxon>Eremothecium</taxon>
    </lineage>
</organism>
<proteinExistence type="inferred from homology"/>
<dbReference type="EMBL" id="AE016814">
    <property type="protein sequence ID" value="AAS50346.1"/>
    <property type="molecule type" value="Genomic_DNA"/>
</dbReference>
<dbReference type="RefSeq" id="NP_982522.1">
    <property type="nucleotide sequence ID" value="NM_207875.1"/>
</dbReference>
<dbReference type="SMR" id="Q75ET6"/>
<dbReference type="FunCoup" id="Q75ET6">
    <property type="interactions" value="320"/>
</dbReference>
<dbReference type="STRING" id="284811.Q75ET6"/>
<dbReference type="EnsemblFungi" id="AAS50346">
    <property type="protein sequence ID" value="AAS50346"/>
    <property type="gene ID" value="AGOS_AAL020C"/>
</dbReference>
<dbReference type="GeneID" id="4618492"/>
<dbReference type="KEGG" id="ago:AGOS_AAL020C"/>
<dbReference type="eggNOG" id="KOG4600">
    <property type="taxonomic scope" value="Eukaryota"/>
</dbReference>
<dbReference type="HOGENOM" id="CLU_063752_0_0_1"/>
<dbReference type="InParanoid" id="Q75ET6"/>
<dbReference type="OMA" id="YLDPFHP"/>
<dbReference type="OrthoDB" id="1867012at2759"/>
<dbReference type="Proteomes" id="UP000000591">
    <property type="component" value="Chromosome I"/>
</dbReference>
<dbReference type="GO" id="GO:0005762">
    <property type="term" value="C:mitochondrial large ribosomal subunit"/>
    <property type="evidence" value="ECO:0000318"/>
    <property type="project" value="GO_Central"/>
</dbReference>
<dbReference type="GO" id="GO:0003735">
    <property type="term" value="F:structural constituent of ribosome"/>
    <property type="evidence" value="ECO:0000318"/>
    <property type="project" value="GO_Central"/>
</dbReference>
<dbReference type="GO" id="GO:0033617">
    <property type="term" value="P:mitochondrial cytochrome c oxidase assembly"/>
    <property type="evidence" value="ECO:0007669"/>
    <property type="project" value="EnsemblFungi"/>
</dbReference>
<dbReference type="GO" id="GO:0006412">
    <property type="term" value="P:translation"/>
    <property type="evidence" value="ECO:0007669"/>
    <property type="project" value="InterPro"/>
</dbReference>
<dbReference type="FunFam" id="2.40.50.100:FF:000042">
    <property type="entry name" value="50S ribosomal protein L27"/>
    <property type="match status" value="1"/>
</dbReference>
<dbReference type="Gene3D" id="2.40.50.100">
    <property type="match status" value="1"/>
</dbReference>
<dbReference type="InterPro" id="IPR001684">
    <property type="entry name" value="Ribosomal_bL27"/>
</dbReference>
<dbReference type="InterPro" id="IPR018261">
    <property type="entry name" value="Ribosomal_bL27_CS"/>
</dbReference>
<dbReference type="InterPro" id="IPR041244">
    <property type="entry name" value="Ribosomal_bL27m_C"/>
</dbReference>
<dbReference type="NCBIfam" id="TIGR00062">
    <property type="entry name" value="L27"/>
    <property type="match status" value="1"/>
</dbReference>
<dbReference type="PANTHER" id="PTHR15893:SF0">
    <property type="entry name" value="LARGE RIBOSOMAL SUBUNIT PROTEIN BL27M"/>
    <property type="match status" value="1"/>
</dbReference>
<dbReference type="PANTHER" id="PTHR15893">
    <property type="entry name" value="RIBOSOMAL PROTEIN L27"/>
    <property type="match status" value="1"/>
</dbReference>
<dbReference type="Pfam" id="PF01016">
    <property type="entry name" value="Ribosomal_L27"/>
    <property type="match status" value="1"/>
</dbReference>
<dbReference type="Pfam" id="PF18471">
    <property type="entry name" value="Ribosomal_L27_C"/>
    <property type="match status" value="1"/>
</dbReference>
<dbReference type="PRINTS" id="PR00063">
    <property type="entry name" value="RIBOSOMALL27"/>
</dbReference>
<dbReference type="SUPFAM" id="SSF110324">
    <property type="entry name" value="Ribosomal L27 protein-like"/>
    <property type="match status" value="1"/>
</dbReference>
<dbReference type="PROSITE" id="PS00831">
    <property type="entry name" value="RIBOSOMAL_L27"/>
    <property type="match status" value="1"/>
</dbReference>
<comment type="function">
    <text evidence="1">Component of the large subunit of mitochondrial ribosome.</text>
</comment>
<comment type="subcellular location">
    <subcellularLocation>
        <location evidence="1">Mitochondrion</location>
    </subcellularLocation>
</comment>
<comment type="similarity">
    <text evidence="3">Belongs to the bacterial ribosomal protein bL27 family.</text>
</comment>
<keyword id="KW-0496">Mitochondrion</keyword>
<keyword id="KW-1185">Reference proteome</keyword>
<keyword id="KW-0687">Ribonucleoprotein</keyword>
<keyword id="KW-0689">Ribosomal protein</keyword>
<keyword id="KW-0809">Transit peptide</keyword>
<evidence type="ECO:0000250" key="1"/>
<evidence type="ECO:0000256" key="2">
    <source>
        <dbReference type="SAM" id="MobiDB-lite"/>
    </source>
</evidence>
<evidence type="ECO:0000305" key="3"/>
<name>RM02_EREGS</name>